<evidence type="ECO:0000255" key="1">
    <source>
        <dbReference type="HAMAP-Rule" id="MF_01201"/>
    </source>
</evidence>
<dbReference type="EC" id="5.1.1.1" evidence="1"/>
<dbReference type="EMBL" id="CP000503">
    <property type="protein sequence ID" value="ABM26228.1"/>
    <property type="molecule type" value="Genomic_DNA"/>
</dbReference>
<dbReference type="RefSeq" id="WP_011790671.1">
    <property type="nucleotide sequence ID" value="NC_008750.1"/>
</dbReference>
<dbReference type="SMR" id="A1RNI3"/>
<dbReference type="KEGG" id="shw:Sputw3181_3416"/>
<dbReference type="HOGENOM" id="CLU_028393_1_0_6"/>
<dbReference type="UniPathway" id="UPA00042">
    <property type="reaction ID" value="UER00497"/>
</dbReference>
<dbReference type="Proteomes" id="UP000002597">
    <property type="component" value="Chromosome"/>
</dbReference>
<dbReference type="GO" id="GO:0005829">
    <property type="term" value="C:cytosol"/>
    <property type="evidence" value="ECO:0007669"/>
    <property type="project" value="TreeGrafter"/>
</dbReference>
<dbReference type="GO" id="GO:0008784">
    <property type="term" value="F:alanine racemase activity"/>
    <property type="evidence" value="ECO:0007669"/>
    <property type="project" value="UniProtKB-UniRule"/>
</dbReference>
<dbReference type="GO" id="GO:0030170">
    <property type="term" value="F:pyridoxal phosphate binding"/>
    <property type="evidence" value="ECO:0007669"/>
    <property type="project" value="UniProtKB-UniRule"/>
</dbReference>
<dbReference type="GO" id="GO:0030632">
    <property type="term" value="P:D-alanine biosynthetic process"/>
    <property type="evidence" value="ECO:0007669"/>
    <property type="project" value="UniProtKB-UniRule"/>
</dbReference>
<dbReference type="CDD" id="cd06827">
    <property type="entry name" value="PLPDE_III_AR_proteobact"/>
    <property type="match status" value="1"/>
</dbReference>
<dbReference type="FunFam" id="2.40.37.10:FF:000002">
    <property type="entry name" value="Alanine racemase"/>
    <property type="match status" value="1"/>
</dbReference>
<dbReference type="FunFam" id="3.20.20.10:FF:000002">
    <property type="entry name" value="Alanine racemase"/>
    <property type="match status" value="1"/>
</dbReference>
<dbReference type="Gene3D" id="3.20.20.10">
    <property type="entry name" value="Alanine racemase"/>
    <property type="match status" value="1"/>
</dbReference>
<dbReference type="Gene3D" id="2.40.37.10">
    <property type="entry name" value="Lyase, Ornithine Decarboxylase, Chain A, domain 1"/>
    <property type="match status" value="1"/>
</dbReference>
<dbReference type="HAMAP" id="MF_01201">
    <property type="entry name" value="Ala_racemase"/>
    <property type="match status" value="1"/>
</dbReference>
<dbReference type="InterPro" id="IPR000821">
    <property type="entry name" value="Ala_racemase"/>
</dbReference>
<dbReference type="InterPro" id="IPR009006">
    <property type="entry name" value="Ala_racemase/Decarboxylase_C"/>
</dbReference>
<dbReference type="InterPro" id="IPR011079">
    <property type="entry name" value="Ala_racemase_C"/>
</dbReference>
<dbReference type="InterPro" id="IPR001608">
    <property type="entry name" value="Ala_racemase_N"/>
</dbReference>
<dbReference type="InterPro" id="IPR020622">
    <property type="entry name" value="Ala_racemase_pyridoxalP-BS"/>
</dbReference>
<dbReference type="InterPro" id="IPR029066">
    <property type="entry name" value="PLP-binding_barrel"/>
</dbReference>
<dbReference type="NCBIfam" id="TIGR00492">
    <property type="entry name" value="alr"/>
    <property type="match status" value="1"/>
</dbReference>
<dbReference type="PANTHER" id="PTHR30511">
    <property type="entry name" value="ALANINE RACEMASE"/>
    <property type="match status" value="1"/>
</dbReference>
<dbReference type="PANTHER" id="PTHR30511:SF4">
    <property type="entry name" value="ALANINE RACEMASE, BIOSYNTHETIC"/>
    <property type="match status" value="1"/>
</dbReference>
<dbReference type="Pfam" id="PF00842">
    <property type="entry name" value="Ala_racemase_C"/>
    <property type="match status" value="1"/>
</dbReference>
<dbReference type="Pfam" id="PF01168">
    <property type="entry name" value="Ala_racemase_N"/>
    <property type="match status" value="1"/>
</dbReference>
<dbReference type="PRINTS" id="PR00992">
    <property type="entry name" value="ALARACEMASE"/>
</dbReference>
<dbReference type="SMART" id="SM01005">
    <property type="entry name" value="Ala_racemase_C"/>
    <property type="match status" value="1"/>
</dbReference>
<dbReference type="SUPFAM" id="SSF50621">
    <property type="entry name" value="Alanine racemase C-terminal domain-like"/>
    <property type="match status" value="1"/>
</dbReference>
<dbReference type="SUPFAM" id="SSF51419">
    <property type="entry name" value="PLP-binding barrel"/>
    <property type="match status" value="1"/>
</dbReference>
<dbReference type="PROSITE" id="PS00395">
    <property type="entry name" value="ALANINE_RACEMASE"/>
    <property type="match status" value="1"/>
</dbReference>
<protein>
    <recommendedName>
        <fullName evidence="1">Alanine racemase</fullName>
        <ecNumber evidence="1">5.1.1.1</ecNumber>
    </recommendedName>
</protein>
<proteinExistence type="inferred from homology"/>
<accession>A1RNI3</accession>
<keyword id="KW-0413">Isomerase</keyword>
<keyword id="KW-0663">Pyridoxal phosphate</keyword>
<sequence length="358" mass="38825">MKPFPRAEISSSALQNNLAVLRQQARASQVMAVVKANGYGHGLLNVANCLVNADGFGLARLEEALELRAGGVKARLLLLEGFFRSTDLPLLVAHDIDTVVHHESQIEMLEQVKLTKPVTVWLKVDSGMHRLGVTPEQFATVYARLMACPNIAKPIHLMTHFACADEPDNHYTDVQMAAFNELTAGLPGFRTLANSAGALYWPKSQGDWIRPGIALYGVSPVAGDCGTNHGLIPAMNLVSRLIAVRDHKANQPVGYGCYWTAKQDTRLGVVAIGYGDGYPRNAPEGTPVWVNGRRVPIVGRVSMDMLTVDLGQDATDKVGDDVLLWGQDLPVEEVAERIGTIAYELVTKLTPRVAVCLA</sequence>
<comment type="function">
    <text evidence="1">Catalyzes the interconversion of L-alanine and D-alanine. May also act on other amino acids.</text>
</comment>
<comment type="catalytic activity">
    <reaction evidence="1">
        <text>L-alanine = D-alanine</text>
        <dbReference type="Rhea" id="RHEA:20249"/>
        <dbReference type="ChEBI" id="CHEBI:57416"/>
        <dbReference type="ChEBI" id="CHEBI:57972"/>
        <dbReference type="EC" id="5.1.1.1"/>
    </reaction>
</comment>
<comment type="cofactor">
    <cofactor evidence="1">
        <name>pyridoxal 5'-phosphate</name>
        <dbReference type="ChEBI" id="CHEBI:597326"/>
    </cofactor>
</comment>
<comment type="pathway">
    <text evidence="1">Amino-acid biosynthesis; D-alanine biosynthesis; D-alanine from L-alanine: step 1/1.</text>
</comment>
<comment type="similarity">
    <text evidence="1">Belongs to the alanine racemase family.</text>
</comment>
<reference key="1">
    <citation type="submission" date="2006-12" db="EMBL/GenBank/DDBJ databases">
        <title>Complete sequence of Shewanella sp. W3-18-1.</title>
        <authorList>
            <consortium name="US DOE Joint Genome Institute"/>
            <person name="Copeland A."/>
            <person name="Lucas S."/>
            <person name="Lapidus A."/>
            <person name="Barry K."/>
            <person name="Detter J.C."/>
            <person name="Glavina del Rio T."/>
            <person name="Hammon N."/>
            <person name="Israni S."/>
            <person name="Dalin E."/>
            <person name="Tice H."/>
            <person name="Pitluck S."/>
            <person name="Chain P."/>
            <person name="Malfatti S."/>
            <person name="Shin M."/>
            <person name="Vergez L."/>
            <person name="Schmutz J."/>
            <person name="Larimer F."/>
            <person name="Land M."/>
            <person name="Hauser L."/>
            <person name="Kyrpides N."/>
            <person name="Lykidis A."/>
            <person name="Tiedje J."/>
            <person name="Richardson P."/>
        </authorList>
    </citation>
    <scope>NUCLEOTIDE SEQUENCE [LARGE SCALE GENOMIC DNA]</scope>
    <source>
        <strain>W3-18-1</strain>
    </source>
</reference>
<gene>
    <name type="primary">alr</name>
    <name type="ordered locus">Sputw3181_3416</name>
</gene>
<name>ALR_SHESW</name>
<feature type="chain" id="PRO_1000164624" description="Alanine racemase">
    <location>
        <begin position="1"/>
        <end position="358"/>
    </location>
</feature>
<feature type="active site" description="Proton acceptor; specific for D-alanine" evidence="1">
    <location>
        <position position="35"/>
    </location>
</feature>
<feature type="active site" description="Proton acceptor; specific for L-alanine" evidence="1">
    <location>
        <position position="255"/>
    </location>
</feature>
<feature type="binding site" evidence="1">
    <location>
        <position position="130"/>
    </location>
    <ligand>
        <name>substrate</name>
    </ligand>
</feature>
<feature type="binding site" evidence="1">
    <location>
        <position position="303"/>
    </location>
    <ligand>
        <name>substrate</name>
    </ligand>
</feature>
<feature type="modified residue" description="N6-(pyridoxal phosphate)lysine" evidence="1">
    <location>
        <position position="35"/>
    </location>
</feature>
<organism>
    <name type="scientific">Shewanella sp. (strain W3-18-1)</name>
    <dbReference type="NCBI Taxonomy" id="351745"/>
    <lineage>
        <taxon>Bacteria</taxon>
        <taxon>Pseudomonadati</taxon>
        <taxon>Pseudomonadota</taxon>
        <taxon>Gammaproteobacteria</taxon>
        <taxon>Alteromonadales</taxon>
        <taxon>Shewanellaceae</taxon>
        <taxon>Shewanella</taxon>
    </lineage>
</organism>